<proteinExistence type="evidence at protein level"/>
<gene>
    <name type="primary">ARFGAP1</name>
    <name type="synonym">ARF1GAP</name>
</gene>
<comment type="function">
    <text evidence="1">GTPase-activating protein (GAP) for the ADP ribosylation factor 1 (ARF1). Involved in membrane trafficking and /or vesicle transport. Promotes hydrolysis of the ARF1-bound GTP and thus, is required for the dissociation of coat proteins from Golgi-derived membranes and vesicles, a prerequisite for vesicle's fusion with target compartment. Probably regulates ARF1-mediated transport via its interaction with the KDELR proteins and TMED2. Overexpression induces the redistribution of the entire Golgi complex to the endoplasmic reticulum, as when ARF1 is deactivated. Its activity is stimulated by phosphoinosides and inhibited by phosphatidylcholine (By similarity).</text>
</comment>
<comment type="subunit">
    <text evidence="1">Interacts with ARF1. Interacts with the COPI coat proteins, KDELR1 and TMED2. The interaction with TMED2 inhibits the GAP activity (By similarity).</text>
</comment>
<comment type="interaction">
    <interactant intactId="EBI-716933">
        <id>Q8N6T3</id>
    </interactant>
    <interactant intactId="EBI-10198738">
        <id>Q6FG41</id>
        <label>FOS</label>
    </interactant>
    <organismsDiffer>false</organismsDiffer>
    <experiments>3</experiments>
</comment>
<comment type="interaction">
    <interactant intactId="EBI-716933">
        <id>Q8N6T3</id>
    </interactant>
    <interactant intactId="EBI-720116">
        <id>P60520</id>
        <label>GABARAPL2</label>
    </interactant>
    <organismsDiffer>false</organismsDiffer>
    <experiments>3</experiments>
</comment>
<comment type="interaction">
    <interactant intactId="EBI-716933">
        <id>Q8N6T3</id>
    </interactant>
    <interactant intactId="EBI-747754">
        <id>P28799</id>
        <label>GRN</label>
    </interactant>
    <organismsDiffer>false</organismsDiffer>
    <experiments>3</experiments>
</comment>
<comment type="interaction">
    <interactant intactId="EBI-716933">
        <id>Q8N6T3</id>
    </interactant>
    <interactant intactId="EBI-10172052">
        <id>P60411</id>
        <label>KRTAP10-9</label>
    </interactant>
    <organismsDiffer>false</organismsDiffer>
    <experiments>3</experiments>
</comment>
<comment type="interaction">
    <interactant intactId="EBI-716933">
        <id>Q8N6T3</id>
    </interactant>
    <interactant intactId="EBI-751260">
        <id>Q9BYR7</id>
        <label>KRTAP3-2</label>
    </interactant>
    <organismsDiffer>false</organismsDiffer>
    <experiments>3</experiments>
</comment>
<comment type="interaction">
    <interactant intactId="EBI-716933">
        <id>Q8N6T3</id>
    </interactant>
    <interactant intactId="EBI-1044640">
        <id>Q9BYQ4</id>
        <label>KRTAP9-2</label>
    </interactant>
    <organismsDiffer>false</organismsDiffer>
    <experiments>3</experiments>
</comment>
<comment type="interaction">
    <interactant intactId="EBI-716933">
        <id>Q8N6T3</id>
    </interactant>
    <interactant intactId="EBI-740098">
        <id>P36406</id>
        <label>TRIM23</label>
    </interactant>
    <organismsDiffer>false</organismsDiffer>
    <experiments>3</experiments>
</comment>
<comment type="interaction">
    <interactant intactId="EBI-6288865">
        <id>Q8N6T3-2</id>
    </interactant>
    <interactant intactId="EBI-720116">
        <id>P60520</id>
        <label>GABARAPL2</label>
    </interactant>
    <organismsDiffer>false</organismsDiffer>
    <experiments>3</experiments>
</comment>
<comment type="interaction">
    <interactant intactId="EBI-6288865">
        <id>Q8N6T3-2</id>
    </interactant>
    <interactant intactId="EBI-5323863">
        <id>Q5S007</id>
        <label>LRRK2</label>
    </interactant>
    <organismsDiffer>false</organismsDiffer>
    <experiments>6</experiments>
</comment>
<comment type="interaction">
    <interactant intactId="EBI-10694449">
        <id>Q8N6T3-3</id>
    </interactant>
    <interactant intactId="EBI-21535880">
        <id>Q92870-2</id>
        <label>APBB2</label>
    </interactant>
    <organismsDiffer>false</organismsDiffer>
    <experiments>3</experiments>
</comment>
<comment type="interaction">
    <interactant intactId="EBI-10694449">
        <id>Q8N6T3-3</id>
    </interactant>
    <interactant intactId="EBI-930964">
        <id>P54253</id>
        <label>ATXN1</label>
    </interactant>
    <organismsDiffer>false</organismsDiffer>
    <experiments>6</experiments>
</comment>
<comment type="interaction">
    <interactant intactId="EBI-10694449">
        <id>Q8N6T3-3</id>
    </interactant>
    <interactant intactId="EBI-744302">
        <id>P14136</id>
        <label>GFAP</label>
    </interactant>
    <organismsDiffer>false</organismsDiffer>
    <experiments>3</experiments>
</comment>
<comment type="interaction">
    <interactant intactId="EBI-10694449">
        <id>Q8N6T3-3</id>
    </interactant>
    <interactant intactId="EBI-747754">
        <id>P28799</id>
        <label>GRN</label>
    </interactant>
    <organismsDiffer>false</organismsDiffer>
    <experiments>3</experiments>
</comment>
<comment type="interaction">
    <interactant intactId="EBI-10694449">
        <id>Q8N6T3-3</id>
    </interactant>
    <interactant intactId="EBI-1391623">
        <id>P29474</id>
        <label>NOS3</label>
    </interactant>
    <organismsDiffer>false</organismsDiffer>
    <experiments>3</experiments>
</comment>
<comment type="interaction">
    <interactant intactId="EBI-10694449">
        <id>Q8N6T3-3</id>
    </interactant>
    <interactant intactId="EBI-50433196">
        <id>A0A6Q8PF08</id>
        <label>PMP22</label>
    </interactant>
    <organismsDiffer>false</organismsDiffer>
    <experiments>3</experiments>
</comment>
<comment type="interaction">
    <interactant intactId="EBI-10694449">
        <id>Q8N6T3-3</id>
    </interactant>
    <interactant intactId="EBI-985879">
        <id>P37840</id>
        <label>SNCA</label>
    </interactant>
    <organismsDiffer>false</organismsDiffer>
    <experiments>3</experiments>
</comment>
<comment type="interaction">
    <interactant intactId="EBI-10694449">
        <id>Q8N6T3-3</id>
    </interactant>
    <interactant intactId="EBI-714860">
        <id>P09936</id>
        <label>UCHL1</label>
    </interactant>
    <organismsDiffer>false</organismsDiffer>
    <experiments>3</experiments>
</comment>
<comment type="subcellular location">
    <subcellularLocation>
        <location evidence="1">Cytoplasm</location>
    </subcellularLocation>
    <subcellularLocation>
        <location evidence="1">Golgi apparatus</location>
    </subcellularLocation>
    <text evidence="1">Associates with the Golgi complex.</text>
</comment>
<comment type="alternative products">
    <event type="alternative splicing"/>
    <isoform>
        <id>Q8N6T3-1</id>
        <name>1</name>
        <sequence type="displayed"/>
    </isoform>
    <isoform>
        <id>Q8N6T3-2</id>
        <name>2</name>
        <sequence type="described" ref="VSP_000298 VSP_000299"/>
    </isoform>
    <isoform>
        <id>Q8N6T3-3</id>
        <name>3</name>
        <sequence type="described" ref="VSP_021818"/>
    </isoform>
    <isoform>
        <id>Q8N6T3-4</id>
        <name>4</name>
        <sequence type="described" ref="VSP_055379 VSP_055380"/>
    </isoform>
    <isoform>
        <id>Q8N6T3-5</id>
        <name>5</name>
        <sequence type="described" ref="VSP_055739 VSP_000298 VSP_000299"/>
    </isoform>
</comment>
<comment type="domain">
    <text evidence="1">The region downstream of Arf-GAP domain is essential to GAP activity in vivo. This region may be required for its targeting to Golgi membranes (By similarity).</text>
</comment>
<comment type="sequence caution" evidence="8">
    <conflict type="erroneous initiation">
        <sequence resource="EMBL-CDS" id="BAB55009"/>
    </conflict>
    <text>Truncated N-terminus.</text>
</comment>
<comment type="sequence caution" evidence="8">
    <conflict type="erroneous initiation">
        <sequence resource="EMBL-CDS" id="BAB55113"/>
    </conflict>
    <text>Truncated N-terminus.</text>
</comment>
<comment type="sequence caution" evidence="8">
    <conflict type="miscellaneous discrepancy">
        <sequence resource="EMBL-CDS" id="CAB70901"/>
    </conflict>
    <text>Intron retention.</text>
</comment>
<evidence type="ECO:0000250" key="1"/>
<evidence type="ECO:0000250" key="2">
    <source>
        <dbReference type="UniProtKB" id="Q62848"/>
    </source>
</evidence>
<evidence type="ECO:0000250" key="3">
    <source>
        <dbReference type="UniProtKB" id="Q9EPJ9"/>
    </source>
</evidence>
<evidence type="ECO:0000255" key="4">
    <source>
        <dbReference type="PROSITE-ProRule" id="PRU00288"/>
    </source>
</evidence>
<evidence type="ECO:0000256" key="5">
    <source>
        <dbReference type="SAM" id="MobiDB-lite"/>
    </source>
</evidence>
<evidence type="ECO:0000303" key="6">
    <source>
    </source>
</evidence>
<evidence type="ECO:0000303" key="7">
    <source>
    </source>
</evidence>
<evidence type="ECO:0000305" key="8"/>
<evidence type="ECO:0007744" key="9">
    <source>
    </source>
</evidence>
<evidence type="ECO:0007744" key="10">
    <source>
    </source>
</evidence>
<evidence type="ECO:0007744" key="11">
    <source>
    </source>
</evidence>
<evidence type="ECO:0007744" key="12">
    <source>
    </source>
</evidence>
<evidence type="ECO:0007744" key="13">
    <source>
    </source>
</evidence>
<evidence type="ECO:0007744" key="14">
    <source>
    </source>
</evidence>
<evidence type="ECO:0007744" key="15">
    <source>
    </source>
</evidence>
<evidence type="ECO:0007829" key="16">
    <source>
        <dbReference type="PDB" id="3DWD"/>
    </source>
</evidence>
<reference key="1">
    <citation type="journal article" date="2004" name="Nat. Genet.">
        <title>Complete sequencing and characterization of 21,243 full-length human cDNAs.</title>
        <authorList>
            <person name="Ota T."/>
            <person name="Suzuki Y."/>
            <person name="Nishikawa T."/>
            <person name="Otsuki T."/>
            <person name="Sugiyama T."/>
            <person name="Irie R."/>
            <person name="Wakamatsu A."/>
            <person name="Hayashi K."/>
            <person name="Sato H."/>
            <person name="Nagai K."/>
            <person name="Kimura K."/>
            <person name="Makita H."/>
            <person name="Sekine M."/>
            <person name="Obayashi M."/>
            <person name="Nishi T."/>
            <person name="Shibahara T."/>
            <person name="Tanaka T."/>
            <person name="Ishii S."/>
            <person name="Yamamoto J."/>
            <person name="Saito K."/>
            <person name="Kawai Y."/>
            <person name="Isono Y."/>
            <person name="Nakamura Y."/>
            <person name="Nagahari K."/>
            <person name="Murakami K."/>
            <person name="Yasuda T."/>
            <person name="Iwayanagi T."/>
            <person name="Wagatsuma M."/>
            <person name="Shiratori A."/>
            <person name="Sudo H."/>
            <person name="Hosoiri T."/>
            <person name="Kaku Y."/>
            <person name="Kodaira H."/>
            <person name="Kondo H."/>
            <person name="Sugawara M."/>
            <person name="Takahashi M."/>
            <person name="Kanda K."/>
            <person name="Yokoi T."/>
            <person name="Furuya T."/>
            <person name="Kikkawa E."/>
            <person name="Omura Y."/>
            <person name="Abe K."/>
            <person name="Kamihara K."/>
            <person name="Katsuta N."/>
            <person name="Sato K."/>
            <person name="Tanikawa M."/>
            <person name="Yamazaki M."/>
            <person name="Ninomiya K."/>
            <person name="Ishibashi T."/>
            <person name="Yamashita H."/>
            <person name="Murakawa K."/>
            <person name="Fujimori K."/>
            <person name="Tanai H."/>
            <person name="Kimata M."/>
            <person name="Watanabe M."/>
            <person name="Hiraoka S."/>
            <person name="Chiba Y."/>
            <person name="Ishida S."/>
            <person name="Ono Y."/>
            <person name="Takiguchi S."/>
            <person name="Watanabe S."/>
            <person name="Yosida M."/>
            <person name="Hotuta T."/>
            <person name="Kusano J."/>
            <person name="Kanehori K."/>
            <person name="Takahashi-Fujii A."/>
            <person name="Hara H."/>
            <person name="Tanase T.-O."/>
            <person name="Nomura Y."/>
            <person name="Togiya S."/>
            <person name="Komai F."/>
            <person name="Hara R."/>
            <person name="Takeuchi K."/>
            <person name="Arita M."/>
            <person name="Imose N."/>
            <person name="Musashino K."/>
            <person name="Yuuki H."/>
            <person name="Oshima A."/>
            <person name="Sasaki N."/>
            <person name="Aotsuka S."/>
            <person name="Yoshikawa Y."/>
            <person name="Matsunawa H."/>
            <person name="Ichihara T."/>
            <person name="Shiohata N."/>
            <person name="Sano S."/>
            <person name="Moriya S."/>
            <person name="Momiyama H."/>
            <person name="Satoh N."/>
            <person name="Takami S."/>
            <person name="Terashima Y."/>
            <person name="Suzuki O."/>
            <person name="Nakagawa S."/>
            <person name="Senoh A."/>
            <person name="Mizoguchi H."/>
            <person name="Goto Y."/>
            <person name="Shimizu F."/>
            <person name="Wakebe H."/>
            <person name="Hishigaki H."/>
            <person name="Watanabe T."/>
            <person name="Sugiyama A."/>
            <person name="Takemoto M."/>
            <person name="Kawakami B."/>
            <person name="Yamazaki M."/>
            <person name="Watanabe K."/>
            <person name="Kumagai A."/>
            <person name="Itakura S."/>
            <person name="Fukuzumi Y."/>
            <person name="Fujimori Y."/>
            <person name="Komiyama M."/>
            <person name="Tashiro H."/>
            <person name="Tanigami A."/>
            <person name="Fujiwara T."/>
            <person name="Ono T."/>
            <person name="Yamada K."/>
            <person name="Fujii Y."/>
            <person name="Ozaki K."/>
            <person name="Hirao M."/>
            <person name="Ohmori Y."/>
            <person name="Kawabata A."/>
            <person name="Hikiji T."/>
            <person name="Kobatake N."/>
            <person name="Inagaki H."/>
            <person name="Ikema Y."/>
            <person name="Okamoto S."/>
            <person name="Okitani R."/>
            <person name="Kawakami T."/>
            <person name="Noguchi S."/>
            <person name="Itoh T."/>
            <person name="Shigeta K."/>
            <person name="Senba T."/>
            <person name="Matsumura K."/>
            <person name="Nakajima Y."/>
            <person name="Mizuno T."/>
            <person name="Morinaga M."/>
            <person name="Sasaki M."/>
            <person name="Togashi T."/>
            <person name="Oyama M."/>
            <person name="Hata H."/>
            <person name="Watanabe M."/>
            <person name="Komatsu T."/>
            <person name="Mizushima-Sugano J."/>
            <person name="Satoh T."/>
            <person name="Shirai Y."/>
            <person name="Takahashi Y."/>
            <person name="Nakagawa K."/>
            <person name="Okumura K."/>
            <person name="Nagase T."/>
            <person name="Nomura N."/>
            <person name="Kikuchi H."/>
            <person name="Masuho Y."/>
            <person name="Yamashita R."/>
            <person name="Nakai K."/>
            <person name="Yada T."/>
            <person name="Nakamura Y."/>
            <person name="Ohara O."/>
            <person name="Isogai T."/>
            <person name="Sugano S."/>
        </authorList>
    </citation>
    <scope>NUCLEOTIDE SEQUENCE [LARGE SCALE MRNA] (ISOFORMS 1; 4 AND 5)</scope>
    <source>
        <tissue>Thymus</tissue>
    </source>
</reference>
<reference key="2">
    <citation type="journal article" date="2001" name="Nature">
        <title>The DNA sequence and comparative analysis of human chromosome 20.</title>
        <authorList>
            <person name="Deloukas P."/>
            <person name="Matthews L.H."/>
            <person name="Ashurst J.L."/>
            <person name="Burton J."/>
            <person name="Gilbert J.G.R."/>
            <person name="Jones M."/>
            <person name="Stavrides G."/>
            <person name="Almeida J.P."/>
            <person name="Babbage A.K."/>
            <person name="Bagguley C.L."/>
            <person name="Bailey J."/>
            <person name="Barlow K.F."/>
            <person name="Bates K.N."/>
            <person name="Beard L.M."/>
            <person name="Beare D.M."/>
            <person name="Beasley O.P."/>
            <person name="Bird C.P."/>
            <person name="Blakey S.E."/>
            <person name="Bridgeman A.M."/>
            <person name="Brown A.J."/>
            <person name="Buck D."/>
            <person name="Burrill W.D."/>
            <person name="Butler A.P."/>
            <person name="Carder C."/>
            <person name="Carter N.P."/>
            <person name="Chapman J.C."/>
            <person name="Clamp M."/>
            <person name="Clark G."/>
            <person name="Clark L.N."/>
            <person name="Clark S.Y."/>
            <person name="Clee C.M."/>
            <person name="Clegg S."/>
            <person name="Cobley V.E."/>
            <person name="Collier R.E."/>
            <person name="Connor R.E."/>
            <person name="Corby N.R."/>
            <person name="Coulson A."/>
            <person name="Coville G.J."/>
            <person name="Deadman R."/>
            <person name="Dhami P.D."/>
            <person name="Dunn M."/>
            <person name="Ellington A.G."/>
            <person name="Frankland J.A."/>
            <person name="Fraser A."/>
            <person name="French L."/>
            <person name="Garner P."/>
            <person name="Grafham D.V."/>
            <person name="Griffiths C."/>
            <person name="Griffiths M.N.D."/>
            <person name="Gwilliam R."/>
            <person name="Hall R.E."/>
            <person name="Hammond S."/>
            <person name="Harley J.L."/>
            <person name="Heath P.D."/>
            <person name="Ho S."/>
            <person name="Holden J.L."/>
            <person name="Howden P.J."/>
            <person name="Huckle E."/>
            <person name="Hunt A.R."/>
            <person name="Hunt S.E."/>
            <person name="Jekosch K."/>
            <person name="Johnson C.M."/>
            <person name="Johnson D."/>
            <person name="Kay M.P."/>
            <person name="Kimberley A.M."/>
            <person name="King A."/>
            <person name="Knights A."/>
            <person name="Laird G.K."/>
            <person name="Lawlor S."/>
            <person name="Lehvaeslaiho M.H."/>
            <person name="Leversha M.A."/>
            <person name="Lloyd C."/>
            <person name="Lloyd D.M."/>
            <person name="Lovell J.D."/>
            <person name="Marsh V.L."/>
            <person name="Martin S.L."/>
            <person name="McConnachie L.J."/>
            <person name="McLay K."/>
            <person name="McMurray A.A."/>
            <person name="Milne S.A."/>
            <person name="Mistry D."/>
            <person name="Moore M.J.F."/>
            <person name="Mullikin J.C."/>
            <person name="Nickerson T."/>
            <person name="Oliver K."/>
            <person name="Parker A."/>
            <person name="Patel R."/>
            <person name="Pearce T.A.V."/>
            <person name="Peck A.I."/>
            <person name="Phillimore B.J.C.T."/>
            <person name="Prathalingam S.R."/>
            <person name="Plumb R.W."/>
            <person name="Ramsay H."/>
            <person name="Rice C.M."/>
            <person name="Ross M.T."/>
            <person name="Scott C.E."/>
            <person name="Sehra H.K."/>
            <person name="Shownkeen R."/>
            <person name="Sims S."/>
            <person name="Skuce C.D."/>
            <person name="Smith M.L."/>
            <person name="Soderlund C."/>
            <person name="Steward C.A."/>
            <person name="Sulston J.E."/>
            <person name="Swann R.M."/>
            <person name="Sycamore N."/>
            <person name="Taylor R."/>
            <person name="Tee L."/>
            <person name="Thomas D.W."/>
            <person name="Thorpe A."/>
            <person name="Tracey A."/>
            <person name="Tromans A.C."/>
            <person name="Vaudin M."/>
            <person name="Wall M."/>
            <person name="Wallis J.M."/>
            <person name="Whitehead S.L."/>
            <person name="Whittaker P."/>
            <person name="Willey D.L."/>
            <person name="Williams L."/>
            <person name="Williams S.A."/>
            <person name="Wilming L."/>
            <person name="Wray P.W."/>
            <person name="Hubbard T."/>
            <person name="Durbin R.M."/>
            <person name="Bentley D.R."/>
            <person name="Beck S."/>
            <person name="Rogers J."/>
        </authorList>
    </citation>
    <scope>NUCLEOTIDE SEQUENCE [LARGE SCALE GENOMIC DNA]</scope>
</reference>
<reference key="3">
    <citation type="submission" date="2005-09" db="EMBL/GenBank/DDBJ databases">
        <authorList>
            <person name="Mural R.J."/>
            <person name="Istrail S."/>
            <person name="Sutton G.G."/>
            <person name="Florea L."/>
            <person name="Halpern A.L."/>
            <person name="Mobarry C.M."/>
            <person name="Lippert R."/>
            <person name="Walenz B."/>
            <person name="Shatkay H."/>
            <person name="Dew I."/>
            <person name="Miller J.R."/>
            <person name="Flanigan M.J."/>
            <person name="Edwards N.J."/>
            <person name="Bolanos R."/>
            <person name="Fasulo D."/>
            <person name="Halldorsson B.V."/>
            <person name="Hannenhalli S."/>
            <person name="Turner R."/>
            <person name="Yooseph S."/>
            <person name="Lu F."/>
            <person name="Nusskern D.R."/>
            <person name="Shue B.C."/>
            <person name="Zheng X.H."/>
            <person name="Zhong F."/>
            <person name="Delcher A.L."/>
            <person name="Huson D.H."/>
            <person name="Kravitz S.A."/>
            <person name="Mouchard L."/>
            <person name="Reinert K."/>
            <person name="Remington K.A."/>
            <person name="Clark A.G."/>
            <person name="Waterman M.S."/>
            <person name="Eichler E.E."/>
            <person name="Adams M.D."/>
            <person name="Hunkapiller M.W."/>
            <person name="Myers E.W."/>
            <person name="Venter J.C."/>
        </authorList>
    </citation>
    <scope>NUCLEOTIDE SEQUENCE [LARGE SCALE GENOMIC DNA]</scope>
</reference>
<reference key="4">
    <citation type="journal article" date="2004" name="Genome Res.">
        <title>The status, quality, and expansion of the NIH full-length cDNA project: the Mammalian Gene Collection (MGC).</title>
        <authorList>
            <consortium name="The MGC Project Team"/>
        </authorList>
    </citation>
    <scope>NUCLEOTIDE SEQUENCE [LARGE SCALE MRNA] (ISOFORMS 2 AND 3)</scope>
    <source>
        <tissue>Brain</tissue>
        <tissue>Fetal brain</tissue>
    </source>
</reference>
<reference key="5">
    <citation type="journal article" date="2007" name="BMC Genomics">
        <title>The full-ORF clone resource of the German cDNA consortium.</title>
        <authorList>
            <person name="Bechtel S."/>
            <person name="Rosenfelder H."/>
            <person name="Duda A."/>
            <person name="Schmidt C.P."/>
            <person name="Ernst U."/>
            <person name="Wellenreuther R."/>
            <person name="Mehrle A."/>
            <person name="Schuster C."/>
            <person name="Bahr A."/>
            <person name="Bloecker H."/>
            <person name="Heubner D."/>
            <person name="Hoerlein A."/>
            <person name="Michel G."/>
            <person name="Wedler H."/>
            <person name="Koehrer K."/>
            <person name="Ottenwaelder B."/>
            <person name="Poustka A."/>
            <person name="Wiemann S."/>
            <person name="Schupp I."/>
        </authorList>
    </citation>
    <scope>NUCLEOTIDE SEQUENCE [LARGE SCALE MRNA] OF 240-406 (ISOFORM 1)</scope>
    <source>
        <tissue>Testis</tissue>
    </source>
</reference>
<reference key="6">
    <citation type="submission" date="1998-06" db="EMBL/GenBank/DDBJ databases">
        <title>HRI NTT human fetal brain cDNA project.</title>
        <authorList>
            <person name="Ueki N."/>
        </authorList>
    </citation>
    <scope>NUCLEOTIDE SEQUENCE [LARGE SCALE MRNA] OF 299-406 (ISOFORM 1)</scope>
    <source>
        <tissue>Fetal brain</tissue>
    </source>
</reference>
<reference key="7">
    <citation type="journal article" date="2006" name="Nat. Biotechnol.">
        <title>A probability-based approach for high-throughput protein phosphorylation analysis and site localization.</title>
        <authorList>
            <person name="Beausoleil S.A."/>
            <person name="Villen J."/>
            <person name="Gerber S.A."/>
            <person name="Rush J."/>
            <person name="Gygi S.P."/>
        </authorList>
    </citation>
    <scope>PHOSPHORYLATION [LARGE SCALE ANALYSIS] AT THR-189</scope>
    <scope>IDENTIFICATION BY MASS SPECTROMETRY [LARGE SCALE ANALYSIS]</scope>
    <source>
        <tissue>Cervix carcinoma</tissue>
    </source>
</reference>
<reference key="8">
    <citation type="journal article" date="2008" name="Proc. Natl. Acad. Sci. U.S.A.">
        <title>A quantitative atlas of mitotic phosphorylation.</title>
        <authorList>
            <person name="Dephoure N."/>
            <person name="Zhou C."/>
            <person name="Villen J."/>
            <person name="Beausoleil S.A."/>
            <person name="Bakalarski C.E."/>
            <person name="Elledge S.J."/>
            <person name="Gygi S.P."/>
        </authorList>
    </citation>
    <scope>PHOSPHORYLATION [LARGE SCALE ANALYSIS] AT THR-135 AND SER-304</scope>
    <scope>IDENTIFICATION BY MASS SPECTROMETRY [LARGE SCALE ANALYSIS]</scope>
    <source>
        <tissue>Cervix carcinoma</tissue>
    </source>
</reference>
<reference key="9">
    <citation type="journal article" date="2009" name="Sci. Signal.">
        <title>Quantitative phosphoproteomic analysis of T cell receptor signaling reveals system-wide modulation of protein-protein interactions.</title>
        <authorList>
            <person name="Mayya V."/>
            <person name="Lundgren D.H."/>
            <person name="Hwang S.-I."/>
            <person name="Rezaul K."/>
            <person name="Wu L."/>
            <person name="Eng J.K."/>
            <person name="Rodionov V."/>
            <person name="Han D.K."/>
        </authorList>
    </citation>
    <scope>PHOSPHORYLATION [LARGE SCALE ANALYSIS] AT THR-189</scope>
    <scope>IDENTIFICATION BY MASS SPECTROMETRY [LARGE SCALE ANALYSIS]</scope>
    <source>
        <tissue>Leukemic T-cell</tissue>
    </source>
</reference>
<reference key="10">
    <citation type="journal article" date="2009" name="Science">
        <title>Lysine acetylation targets protein complexes and co-regulates major cellular functions.</title>
        <authorList>
            <person name="Choudhary C."/>
            <person name="Kumar C."/>
            <person name="Gnad F."/>
            <person name="Nielsen M.L."/>
            <person name="Rehman M."/>
            <person name="Walther T.C."/>
            <person name="Olsen J.V."/>
            <person name="Mann M."/>
        </authorList>
    </citation>
    <scope>ACETYLATION [LARGE SCALE ANALYSIS] AT LYS-231</scope>
    <scope>IDENTIFICATION BY MASS SPECTROMETRY [LARGE SCALE ANALYSIS]</scope>
</reference>
<reference key="11">
    <citation type="journal article" date="2010" name="Sci. Signal.">
        <title>Quantitative phosphoproteomics reveals widespread full phosphorylation site occupancy during mitosis.</title>
        <authorList>
            <person name="Olsen J.V."/>
            <person name="Vermeulen M."/>
            <person name="Santamaria A."/>
            <person name="Kumar C."/>
            <person name="Miller M.L."/>
            <person name="Jensen L.J."/>
            <person name="Gnad F."/>
            <person name="Cox J."/>
            <person name="Jensen T.S."/>
            <person name="Nigg E.A."/>
            <person name="Brunak S."/>
            <person name="Mann M."/>
        </authorList>
    </citation>
    <scope>PHOSPHORYLATION [LARGE SCALE ANALYSIS] AT THR-135 AND THR-189</scope>
    <scope>IDENTIFICATION BY MASS SPECTROMETRY [LARGE SCALE ANALYSIS]</scope>
    <source>
        <tissue>Cervix carcinoma</tissue>
    </source>
</reference>
<reference key="12">
    <citation type="journal article" date="2011" name="BMC Syst. Biol.">
        <title>Initial characterization of the human central proteome.</title>
        <authorList>
            <person name="Burkard T.R."/>
            <person name="Planyavsky M."/>
            <person name="Kaupe I."/>
            <person name="Breitwieser F.P."/>
            <person name="Buerckstuemmer T."/>
            <person name="Bennett K.L."/>
            <person name="Superti-Furga G."/>
            <person name="Colinge J."/>
        </authorList>
    </citation>
    <scope>IDENTIFICATION BY MASS SPECTROMETRY [LARGE SCALE ANALYSIS]</scope>
</reference>
<reference key="13">
    <citation type="journal article" date="2013" name="J. Proteome Res.">
        <title>Toward a comprehensive characterization of a human cancer cell phosphoproteome.</title>
        <authorList>
            <person name="Zhou H."/>
            <person name="Di Palma S."/>
            <person name="Preisinger C."/>
            <person name="Peng M."/>
            <person name="Polat A.N."/>
            <person name="Heck A.J."/>
            <person name="Mohammed S."/>
        </authorList>
    </citation>
    <scope>PHOSPHORYLATION [LARGE SCALE ANALYSIS] AT THR-135; THR-189; SER-246; SER-343; THR-350 AND SER-361</scope>
    <scope>IDENTIFICATION BY MASS SPECTROMETRY [LARGE SCALE ANALYSIS]</scope>
    <source>
        <tissue>Cervix carcinoma</tissue>
        <tissue>Erythroleukemia</tissue>
    </source>
</reference>
<reference key="14">
    <citation type="journal article" date="2014" name="J. Proteomics">
        <title>An enzyme assisted RP-RPLC approach for in-depth analysis of human liver phosphoproteome.</title>
        <authorList>
            <person name="Bian Y."/>
            <person name="Song C."/>
            <person name="Cheng K."/>
            <person name="Dong M."/>
            <person name="Wang F."/>
            <person name="Huang J."/>
            <person name="Sun D."/>
            <person name="Wang L."/>
            <person name="Ye M."/>
            <person name="Zou H."/>
        </authorList>
    </citation>
    <scope>PHOSPHORYLATION [LARGE SCALE ANALYSIS] AT SER-150 AND THR-189</scope>
    <scope>IDENTIFICATION BY MASS SPECTROMETRY [LARGE SCALE ANALYSIS]</scope>
    <source>
        <tissue>Liver</tissue>
    </source>
</reference>
<reference key="15">
    <citation type="submission" date="2009-02" db="PDB data bank">
        <title>Crystal structure of the ARFGAP domain of human ARFGAP1.</title>
        <authorList>
            <consortium name="Structural genomics consortium (SGC)"/>
        </authorList>
    </citation>
    <scope>X-RAY CRYSTALLOGRAPHY (2.4 ANGSTROMS) OF 1-128 IN COMPLEX WITH ZINC IONS</scope>
</reference>
<feature type="chain" id="PRO_0000074190" description="ADP-ribosylation factor GTPase-activating protein 1">
    <location>
        <begin position="1"/>
        <end position="406"/>
    </location>
</feature>
<feature type="domain" description="Arf-GAP" evidence="4">
    <location>
        <begin position="7"/>
        <end position="124"/>
    </location>
</feature>
<feature type="zinc finger region" description="C4-type" evidence="4">
    <location>
        <begin position="22"/>
        <end position="45"/>
    </location>
</feature>
<feature type="region of interest" description="Disordered" evidence="5">
    <location>
        <begin position="297"/>
        <end position="406"/>
    </location>
</feature>
<feature type="compositionally biased region" description="Polar residues" evidence="5">
    <location>
        <begin position="307"/>
        <end position="329"/>
    </location>
</feature>
<feature type="compositionally biased region" description="Polar residues" evidence="5">
    <location>
        <begin position="343"/>
        <end position="354"/>
    </location>
</feature>
<feature type="compositionally biased region" description="Polar residues" evidence="5">
    <location>
        <begin position="369"/>
        <end position="379"/>
    </location>
</feature>
<feature type="modified residue" description="Phosphothreonine" evidence="10 13 14">
    <location>
        <position position="135"/>
    </location>
</feature>
<feature type="modified residue" description="Phosphoserine" evidence="15">
    <location>
        <position position="150"/>
    </location>
</feature>
<feature type="modified residue" description="Phosphothreonine" evidence="9 12 13 14 15">
    <location>
        <position position="189"/>
    </location>
</feature>
<feature type="modified residue" description="N6-acetyllysine" evidence="11">
    <location>
        <position position="231"/>
    </location>
</feature>
<feature type="modified residue" description="Phosphoserine" evidence="14">
    <location>
        <position position="246"/>
    </location>
</feature>
<feature type="modified residue" description="Phosphoserine" evidence="10">
    <location>
        <position position="304"/>
    </location>
</feature>
<feature type="modified residue" description="Phosphoserine" evidence="14">
    <location>
        <position position="343"/>
    </location>
</feature>
<feature type="modified residue" description="Phosphoserine" evidence="3">
    <location>
        <position position="346"/>
    </location>
</feature>
<feature type="modified residue" description="Phosphoserine" evidence="3">
    <location>
        <position position="348"/>
    </location>
</feature>
<feature type="modified residue" description="Phosphothreonine" evidence="14">
    <location>
        <position position="350"/>
    </location>
</feature>
<feature type="modified residue" description="Phosphoserine" evidence="14">
    <location>
        <position position="361"/>
    </location>
</feature>
<feature type="modified residue" description="Phosphoserine" evidence="3">
    <location>
        <position position="363"/>
    </location>
</feature>
<feature type="modified residue" description="Phosphoserine" evidence="2">
    <location>
        <position position="378"/>
    </location>
</feature>
<feature type="splice variant" id="VSP_055739" description="In isoform 5." evidence="6">
    <original>MASPRTRKVLKEVRVQDENNVCFECGAFNPQWVSVTYGIWICLECSGRHRGLGVHLS</original>
    <variation>MRTT</variation>
    <location>
        <begin position="1"/>
        <end position="57"/>
    </location>
</feature>
<feature type="splice variant" id="VSP_055379" description="In isoform 4." evidence="6">
    <original>MASPRTRKVLKEVRVQDENNVCFECGAFNPQWVS</original>
    <variation>MLSSESSWSLRRITILAGPCRRSTTAEPRPSLGI</variation>
    <location>
        <begin position="1"/>
        <end position="34"/>
    </location>
</feature>
<feature type="splice variant" id="VSP_055380" description="In isoform 4." evidence="6">
    <location>
        <begin position="35"/>
        <end position="147"/>
    </location>
</feature>
<feature type="splice variant" id="VSP_000298" description="In isoform 2 and isoform 5." evidence="6 7">
    <original>K</original>
    <variation>KFWGHKQQPEP</variation>
    <location>
        <position position="239"/>
    </location>
</feature>
<feature type="splice variant" id="VSP_021818" description="In isoform 3." evidence="7">
    <original>VQGVGSKGWRDVTTFFSGKAEGPLDSPSEGHSYQNSGLDHFQNSNIDQSFWETFGSAEPTKTRKSPSSDSWTCADTSTERRSSDSWEVWGSASTNRNSNSDGGEGGEGTKKAVPPAVPTDDGWDNQNW</original>
    <variation>CQRRLCCHQSHCSAGHLGRAFCPVSWHEALCGQTGREEQASLLPPKHVVGALEVCARGCPRCHVPHTPGTAAEWPGRLCLSRESVVRDGGTSPPFFRGKQRAPWTAPRRATVIRTAVWTTSKTAT</variation>
    <location>
        <begin position="279"/>
        <end position="406"/>
    </location>
</feature>
<feature type="splice variant" id="VSP_000299" description="In isoform 2 and isoform 5." evidence="6 7">
    <location>
        <begin position="279"/>
        <end position="280"/>
    </location>
</feature>
<feature type="sequence variant" id="VAR_015187" description="In dbSNP:rs2273499.">
    <original>V</original>
    <variation>M</variation>
    <location>
        <position position="184"/>
    </location>
</feature>
<feature type="sequence conflict" description="In Ref. 1; BAB55009." evidence="8" ref="1">
    <original>Q</original>
    <variation>R</variation>
    <location>
        <position position="274"/>
    </location>
</feature>
<feature type="sequence conflict" description="In Ref. 1; BAH12326." evidence="8" ref="1">
    <original>R</original>
    <variation>G</variation>
    <location>
        <position position="358"/>
    </location>
</feature>
<feature type="helix" evidence="16">
    <location>
        <begin position="4"/>
        <end position="14"/>
    </location>
</feature>
<feature type="turn" evidence="16">
    <location>
        <begin position="17"/>
        <end position="20"/>
    </location>
</feature>
<feature type="turn" evidence="16">
    <location>
        <begin position="23"/>
        <end position="25"/>
    </location>
</feature>
<feature type="strand" evidence="16">
    <location>
        <begin position="32"/>
        <end position="34"/>
    </location>
</feature>
<feature type="turn" evidence="16">
    <location>
        <begin position="35"/>
        <end position="38"/>
    </location>
</feature>
<feature type="strand" evidence="16">
    <location>
        <begin position="39"/>
        <end position="41"/>
    </location>
</feature>
<feature type="helix" evidence="16">
    <location>
        <begin position="43"/>
        <end position="52"/>
    </location>
</feature>
<feature type="turn" evidence="16">
    <location>
        <begin position="54"/>
        <end position="56"/>
    </location>
</feature>
<feature type="strand" evidence="16">
    <location>
        <begin position="59"/>
        <end position="62"/>
    </location>
</feature>
<feature type="helix" evidence="16">
    <location>
        <begin position="69"/>
        <end position="77"/>
    </location>
</feature>
<feature type="helix" evidence="16">
    <location>
        <begin position="80"/>
        <end position="88"/>
    </location>
</feature>
<feature type="helix" evidence="16">
    <location>
        <begin position="99"/>
        <end position="103"/>
    </location>
</feature>
<feature type="helix" evidence="16">
    <location>
        <begin position="106"/>
        <end position="119"/>
    </location>
</feature>
<organism>
    <name type="scientific">Homo sapiens</name>
    <name type="common">Human</name>
    <dbReference type="NCBI Taxonomy" id="9606"/>
    <lineage>
        <taxon>Eukaryota</taxon>
        <taxon>Metazoa</taxon>
        <taxon>Chordata</taxon>
        <taxon>Craniata</taxon>
        <taxon>Vertebrata</taxon>
        <taxon>Euteleostomi</taxon>
        <taxon>Mammalia</taxon>
        <taxon>Eutheria</taxon>
        <taxon>Euarchontoglires</taxon>
        <taxon>Primates</taxon>
        <taxon>Haplorrhini</taxon>
        <taxon>Catarrhini</taxon>
        <taxon>Hominidae</taxon>
        <taxon>Homo</taxon>
    </lineage>
</organism>
<dbReference type="EMBL" id="AK001629">
    <property type="protein sequence ID" value="BAA91796.1"/>
    <property type="molecule type" value="mRNA"/>
</dbReference>
<dbReference type="EMBL" id="AK027268">
    <property type="protein sequence ID" value="BAB55009.1"/>
    <property type="status" value="ALT_INIT"/>
    <property type="molecule type" value="mRNA"/>
</dbReference>
<dbReference type="EMBL" id="AK296351">
    <property type="protein sequence ID" value="BAH12326.1"/>
    <property type="molecule type" value="mRNA"/>
</dbReference>
<dbReference type="EMBL" id="AK027441">
    <property type="protein sequence ID" value="BAB55113.1"/>
    <property type="status" value="ALT_INIT"/>
    <property type="molecule type" value="mRNA"/>
</dbReference>
<dbReference type="EMBL" id="AK303454">
    <property type="protein sequence ID" value="BAH13964.1"/>
    <property type="molecule type" value="mRNA"/>
</dbReference>
<dbReference type="EMBL" id="AL121827">
    <property type="status" value="NOT_ANNOTATED_CDS"/>
    <property type="molecule type" value="Genomic_DNA"/>
</dbReference>
<dbReference type="EMBL" id="CH471077">
    <property type="protein sequence ID" value="EAW75292.1"/>
    <property type="molecule type" value="Genomic_DNA"/>
</dbReference>
<dbReference type="EMBL" id="CH471077">
    <property type="protein sequence ID" value="EAW75294.1"/>
    <property type="molecule type" value="Genomic_DNA"/>
</dbReference>
<dbReference type="EMBL" id="BC000786">
    <property type="protein sequence ID" value="AAH00786.1"/>
    <property type="molecule type" value="mRNA"/>
</dbReference>
<dbReference type="EMBL" id="BC006085">
    <property type="protein sequence ID" value="AAH06085.1"/>
    <property type="molecule type" value="mRNA"/>
</dbReference>
<dbReference type="EMBL" id="BC011876">
    <property type="protein sequence ID" value="AAH11876.1"/>
    <property type="molecule type" value="mRNA"/>
</dbReference>
<dbReference type="EMBL" id="BC028233">
    <property type="protein sequence ID" value="AAH28233.1"/>
    <property type="molecule type" value="mRNA"/>
</dbReference>
<dbReference type="EMBL" id="AL137744">
    <property type="protein sequence ID" value="CAB70901.1"/>
    <property type="status" value="ALT_SEQ"/>
    <property type="molecule type" value="mRNA"/>
</dbReference>
<dbReference type="EMBL" id="AB015340">
    <property type="protein sequence ID" value="BAA88117.1"/>
    <property type="molecule type" value="mRNA"/>
</dbReference>
<dbReference type="CCDS" id="CCDS13515.1">
    <molecule id="Q8N6T3-1"/>
</dbReference>
<dbReference type="CCDS" id="CCDS13516.1">
    <molecule id="Q8N6T3-2"/>
</dbReference>
<dbReference type="CCDS" id="CCDS63326.1">
    <molecule id="Q8N6T3-3"/>
</dbReference>
<dbReference type="CCDS" id="CCDS63327.1">
    <molecule id="Q8N6T3-5"/>
</dbReference>
<dbReference type="CCDS" id="CCDS63328.1">
    <molecule id="Q8N6T3-4"/>
</dbReference>
<dbReference type="PIR" id="T46298">
    <property type="entry name" value="T46298"/>
</dbReference>
<dbReference type="RefSeq" id="NP_001268411.1">
    <molecule id="Q8N6T3-3"/>
    <property type="nucleotide sequence ID" value="NM_001281482.2"/>
</dbReference>
<dbReference type="RefSeq" id="NP_001268412.1">
    <molecule id="Q8N6T3-5"/>
    <property type="nucleotide sequence ID" value="NM_001281483.2"/>
</dbReference>
<dbReference type="RefSeq" id="NP_001268413.1">
    <molecule id="Q8N6T3-4"/>
    <property type="nucleotide sequence ID" value="NM_001281484.2"/>
</dbReference>
<dbReference type="RefSeq" id="NP_060679.1">
    <molecule id="Q8N6T3-1"/>
    <property type="nucleotide sequence ID" value="NM_018209.4"/>
</dbReference>
<dbReference type="RefSeq" id="NP_783202.1">
    <molecule id="Q8N6T3-2"/>
    <property type="nucleotide sequence ID" value="NM_175609.3"/>
</dbReference>
<dbReference type="RefSeq" id="XP_047296243.1">
    <molecule id="Q8N6T3-1"/>
    <property type="nucleotide sequence ID" value="XM_047440287.1"/>
</dbReference>
<dbReference type="RefSeq" id="XP_054179655.1">
    <molecule id="Q8N6T3-1"/>
    <property type="nucleotide sequence ID" value="XM_054323680.1"/>
</dbReference>
<dbReference type="PDB" id="3DWD">
    <property type="method" value="X-ray"/>
    <property type="resolution" value="2.40 A"/>
    <property type="chains" value="A/B=1-128"/>
</dbReference>
<dbReference type="PDB" id="3O47">
    <property type="method" value="X-ray"/>
    <property type="resolution" value="2.80 A"/>
    <property type="chains" value="A/B=1-140"/>
</dbReference>
<dbReference type="PDBsum" id="3DWD"/>
<dbReference type="PDBsum" id="3O47"/>
<dbReference type="SMR" id="Q8N6T3"/>
<dbReference type="BioGRID" id="120856">
    <property type="interactions" value="138"/>
</dbReference>
<dbReference type="FunCoup" id="Q8N6T3">
    <property type="interactions" value="2311"/>
</dbReference>
<dbReference type="IntAct" id="Q8N6T3">
    <property type="interactions" value="80"/>
</dbReference>
<dbReference type="MINT" id="Q8N6T3"/>
<dbReference type="STRING" id="9606.ENSP00000314615"/>
<dbReference type="BindingDB" id="Q8N6T3"/>
<dbReference type="ChEMBL" id="CHEMBL5465332"/>
<dbReference type="GlyCosmos" id="Q8N6T3">
    <property type="glycosylation" value="2 sites, 1 glycan"/>
</dbReference>
<dbReference type="GlyGen" id="Q8N6T3">
    <property type="glycosylation" value="2 sites, 1 O-linked glycan (2 sites)"/>
</dbReference>
<dbReference type="iPTMnet" id="Q8N6T3"/>
<dbReference type="PhosphoSitePlus" id="Q8N6T3"/>
<dbReference type="SwissPalm" id="Q8N6T3"/>
<dbReference type="BioMuta" id="ARFGAP1"/>
<dbReference type="DMDM" id="27923731"/>
<dbReference type="jPOST" id="Q8N6T3"/>
<dbReference type="MassIVE" id="Q8N6T3"/>
<dbReference type="PaxDb" id="9606-ENSP00000314615"/>
<dbReference type="PeptideAtlas" id="Q8N6T3"/>
<dbReference type="ProteomicsDB" id="18575"/>
<dbReference type="ProteomicsDB" id="6951"/>
<dbReference type="ProteomicsDB" id="72229">
    <molecule id="Q8N6T3-1"/>
</dbReference>
<dbReference type="ProteomicsDB" id="72230">
    <molecule id="Q8N6T3-2"/>
</dbReference>
<dbReference type="ProteomicsDB" id="72231">
    <molecule id="Q8N6T3-3"/>
</dbReference>
<dbReference type="Pumba" id="Q8N6T3"/>
<dbReference type="Antibodypedia" id="29683">
    <property type="antibodies" value="420 antibodies from 33 providers"/>
</dbReference>
<dbReference type="DNASU" id="55738"/>
<dbReference type="Ensembl" id="ENST00000353546.7">
    <molecule id="Q8N6T3-2"/>
    <property type="protein sequence ID" value="ENSP00000314615.3"/>
    <property type="gene ID" value="ENSG00000101199.13"/>
</dbReference>
<dbReference type="Ensembl" id="ENST00000370275.8">
    <molecule id="Q8N6T3-3"/>
    <property type="protein sequence ID" value="ENSP00000359298.4"/>
    <property type="gene ID" value="ENSG00000101199.13"/>
</dbReference>
<dbReference type="Ensembl" id="ENST00000370283.9">
    <molecule id="Q8N6T3-1"/>
    <property type="protein sequence ID" value="ENSP00000359306.4"/>
    <property type="gene ID" value="ENSG00000101199.13"/>
</dbReference>
<dbReference type="Ensembl" id="ENST00000519273.6">
    <molecule id="Q8N6T3-4"/>
    <property type="protein sequence ID" value="ENSP00000443716.1"/>
    <property type="gene ID" value="ENSG00000101199.13"/>
</dbReference>
<dbReference type="Ensembl" id="ENST00000519604.5">
    <molecule id="Q8N6T3-5"/>
    <property type="protein sequence ID" value="ENSP00000430500.1"/>
    <property type="gene ID" value="ENSG00000101199.13"/>
</dbReference>
<dbReference type="GeneID" id="55738"/>
<dbReference type="KEGG" id="hsa:55738"/>
<dbReference type="MANE-Select" id="ENST00000370283.9">
    <property type="protein sequence ID" value="ENSP00000359306.4"/>
    <property type="RefSeq nucleotide sequence ID" value="NM_018209.4"/>
    <property type="RefSeq protein sequence ID" value="NP_060679.1"/>
</dbReference>
<dbReference type="UCSC" id="uc002yel.5">
    <molecule id="Q8N6T3-1"/>
    <property type="organism name" value="human"/>
</dbReference>
<dbReference type="AGR" id="HGNC:15852"/>
<dbReference type="CTD" id="55738"/>
<dbReference type="DisGeNET" id="55738"/>
<dbReference type="GeneCards" id="ARFGAP1"/>
<dbReference type="HGNC" id="HGNC:15852">
    <property type="gene designation" value="ARFGAP1"/>
</dbReference>
<dbReference type="HPA" id="ENSG00000101199">
    <property type="expression patterns" value="Low tissue specificity"/>
</dbReference>
<dbReference type="MIM" id="608377">
    <property type="type" value="gene"/>
</dbReference>
<dbReference type="neXtProt" id="NX_Q8N6T3"/>
<dbReference type="OpenTargets" id="ENSG00000101199"/>
<dbReference type="PharmGKB" id="PA164741246"/>
<dbReference type="VEuPathDB" id="HostDB:ENSG00000101199"/>
<dbReference type="eggNOG" id="KOG0704">
    <property type="taxonomic scope" value="Eukaryota"/>
</dbReference>
<dbReference type="GeneTree" id="ENSGT00890000139515"/>
<dbReference type="HOGENOM" id="CLU_044516_0_0_1"/>
<dbReference type="InParanoid" id="Q8N6T3"/>
<dbReference type="OMA" id="MSKLWEV"/>
<dbReference type="OrthoDB" id="983479at2759"/>
<dbReference type="PAN-GO" id="Q8N6T3">
    <property type="GO annotations" value="4 GO annotations based on evolutionary models"/>
</dbReference>
<dbReference type="PhylomeDB" id="Q8N6T3"/>
<dbReference type="TreeFam" id="TF105931"/>
<dbReference type="PathwayCommons" id="Q8N6T3"/>
<dbReference type="Reactome" id="R-HSA-381038">
    <property type="pathway name" value="XBP1(S) activates chaperone genes"/>
</dbReference>
<dbReference type="Reactome" id="R-HSA-6807878">
    <property type="pathway name" value="COPI-mediated anterograde transport"/>
</dbReference>
<dbReference type="Reactome" id="R-HSA-6811434">
    <property type="pathway name" value="COPI-dependent Golgi-to-ER retrograde traffic"/>
</dbReference>
<dbReference type="Reactome" id="R-HSA-8856828">
    <property type="pathway name" value="Clathrin-mediated endocytosis"/>
</dbReference>
<dbReference type="SignaLink" id="Q8N6T3"/>
<dbReference type="SIGNOR" id="Q8N6T3"/>
<dbReference type="BioGRID-ORCS" id="55738">
    <property type="hits" value="6 hits in 1165 CRISPR screens"/>
</dbReference>
<dbReference type="ChiTaRS" id="ARFGAP1">
    <property type="organism name" value="human"/>
</dbReference>
<dbReference type="EvolutionaryTrace" id="Q8N6T3"/>
<dbReference type="GeneWiki" id="ARFGAP1"/>
<dbReference type="GenomeRNAi" id="55738"/>
<dbReference type="Pharos" id="Q8N6T3">
    <property type="development level" value="Tbio"/>
</dbReference>
<dbReference type="PRO" id="PR:Q8N6T3"/>
<dbReference type="Proteomes" id="UP000005640">
    <property type="component" value="Chromosome 20"/>
</dbReference>
<dbReference type="RNAct" id="Q8N6T3">
    <property type="molecule type" value="protein"/>
</dbReference>
<dbReference type="Bgee" id="ENSG00000101199">
    <property type="expression patterns" value="Expressed in adenohypophysis and 188 other cell types or tissues"/>
</dbReference>
<dbReference type="ExpressionAtlas" id="Q8N6T3">
    <property type="expression patterns" value="baseline and differential"/>
</dbReference>
<dbReference type="GO" id="GO:0005829">
    <property type="term" value="C:cytosol"/>
    <property type="evidence" value="ECO:0000304"/>
    <property type="project" value="Reactome"/>
</dbReference>
<dbReference type="GO" id="GO:0000139">
    <property type="term" value="C:Golgi membrane"/>
    <property type="evidence" value="ECO:0000318"/>
    <property type="project" value="GO_Central"/>
</dbReference>
<dbReference type="GO" id="GO:0045202">
    <property type="term" value="C:synapse"/>
    <property type="evidence" value="ECO:0000314"/>
    <property type="project" value="SynGO"/>
</dbReference>
<dbReference type="GO" id="GO:0005096">
    <property type="term" value="F:GTPase activator activity"/>
    <property type="evidence" value="ECO:0000314"/>
    <property type="project" value="MGI"/>
</dbReference>
<dbReference type="GO" id="GO:0008270">
    <property type="term" value="F:zinc ion binding"/>
    <property type="evidence" value="ECO:0007669"/>
    <property type="project" value="UniProtKB-KW"/>
</dbReference>
<dbReference type="GO" id="GO:0015031">
    <property type="term" value="P:protein transport"/>
    <property type="evidence" value="ECO:0007669"/>
    <property type="project" value="UniProtKB-KW"/>
</dbReference>
<dbReference type="GO" id="GO:0032012">
    <property type="term" value="P:regulation of ARF protein signal transduction"/>
    <property type="evidence" value="ECO:0000318"/>
    <property type="project" value="GO_Central"/>
</dbReference>
<dbReference type="GO" id="GO:0030100">
    <property type="term" value="P:regulation of endocytosis"/>
    <property type="evidence" value="ECO:0000318"/>
    <property type="project" value="GO_Central"/>
</dbReference>
<dbReference type="GO" id="GO:0016192">
    <property type="term" value="P:vesicle-mediated transport"/>
    <property type="evidence" value="ECO:0007669"/>
    <property type="project" value="UniProtKB-KW"/>
</dbReference>
<dbReference type="CDD" id="cd08830">
    <property type="entry name" value="ArfGap_ArfGap1"/>
    <property type="match status" value="1"/>
</dbReference>
<dbReference type="FunFam" id="1.10.220.150:FF:000008">
    <property type="entry name" value="ADP-ribosylation factor GTPase activating protein 1"/>
    <property type="match status" value="1"/>
</dbReference>
<dbReference type="Gene3D" id="1.10.220.150">
    <property type="entry name" value="Arf GTPase activating protein"/>
    <property type="match status" value="1"/>
</dbReference>
<dbReference type="InterPro" id="IPR037278">
    <property type="entry name" value="ARFGAP/RecO"/>
</dbReference>
<dbReference type="InterPro" id="IPR001164">
    <property type="entry name" value="ArfGAP_dom"/>
</dbReference>
<dbReference type="InterPro" id="IPR038508">
    <property type="entry name" value="ArfGAP_dom_sf"/>
</dbReference>
<dbReference type="PANTHER" id="PTHR46395">
    <property type="entry name" value="ADP-RIBOSYLATION FACTOR GTPASE-ACTIVATING PROTEIN 1"/>
    <property type="match status" value="1"/>
</dbReference>
<dbReference type="PANTHER" id="PTHR46395:SF1">
    <property type="entry name" value="ADP-RIBOSYLATION FACTOR GTPASE-ACTIVATING PROTEIN 1"/>
    <property type="match status" value="1"/>
</dbReference>
<dbReference type="Pfam" id="PF01412">
    <property type="entry name" value="ArfGap"/>
    <property type="match status" value="1"/>
</dbReference>
<dbReference type="PRINTS" id="PR00405">
    <property type="entry name" value="REVINTRACTNG"/>
</dbReference>
<dbReference type="SMART" id="SM00105">
    <property type="entry name" value="ArfGap"/>
    <property type="match status" value="1"/>
</dbReference>
<dbReference type="SUPFAM" id="SSF57863">
    <property type="entry name" value="ArfGap/RecO-like zinc finger"/>
    <property type="match status" value="1"/>
</dbReference>
<dbReference type="PROSITE" id="PS50115">
    <property type="entry name" value="ARFGAP"/>
    <property type="match status" value="1"/>
</dbReference>
<protein>
    <recommendedName>
        <fullName>ADP-ribosylation factor GTPase-activating protein 1</fullName>
        <shortName>ARF GAP 1</shortName>
    </recommendedName>
    <alternativeName>
        <fullName>ADP-ribosylation factor 1 GTPase-activating protein</fullName>
        <shortName>ARF1 GAP</shortName>
    </alternativeName>
    <alternativeName>
        <fullName>ARF1-directed GTPase-activating protein</fullName>
    </alternativeName>
</protein>
<accession>Q8N6T3</accession>
<accession>B7Z3U0</accession>
<accession>B7Z8H8</accession>
<accession>B7ZBI3</accession>
<accession>E1P5I9</accession>
<accession>E7EV62</accession>
<accession>Q6PK71</accession>
<accession>Q96KC4</accession>
<accession>Q96T02</accession>
<accession>Q9NSU3</accession>
<accession>Q9NVF6</accession>
<accession>Q9UIL0</accession>
<sequence length="406" mass="44668">MASPRTRKVLKEVRVQDENNVCFECGAFNPQWVSVTYGIWICLECSGRHRGLGVHLSFVRSVTMDKWKDIELEKMKAGGNAKFREFLESQEDYDPCWSLQEKYNSRAAALFRDKVVALAEGREWSLESSPAQNWTPPQPRTLPSMVHRVSGQPQSVTASSDKAFEDWLNDDLGSYQGAQGNRYVGFGNTPPPQKKEDDFLNNAMSSLYSGWSSFTTGASRFASAAKEGATKFGSQASQKASELGHSLNENVLKPAQEKVKEGKIFDDVSSGVSQLASKVQGVGSKGWRDVTTFFSGKAEGPLDSPSEGHSYQNSGLDHFQNSNIDQSFWETFGSAEPTKTRKSPSSDSWTCADTSTERRSSDSWEVWGSASTNRNSNSDGGEGGEGTKKAVPPAVPTDDGWDNQNW</sequence>
<keyword id="KW-0002">3D-structure</keyword>
<keyword id="KW-0007">Acetylation</keyword>
<keyword id="KW-0025">Alternative splicing</keyword>
<keyword id="KW-0963">Cytoplasm</keyword>
<keyword id="KW-0931">ER-Golgi transport</keyword>
<keyword id="KW-0333">Golgi apparatus</keyword>
<keyword id="KW-0343">GTPase activation</keyword>
<keyword id="KW-0479">Metal-binding</keyword>
<keyword id="KW-0597">Phosphoprotein</keyword>
<keyword id="KW-0653">Protein transport</keyword>
<keyword id="KW-1267">Proteomics identification</keyword>
<keyword id="KW-1185">Reference proteome</keyword>
<keyword id="KW-0813">Transport</keyword>
<keyword id="KW-0862">Zinc</keyword>
<keyword id="KW-0863">Zinc-finger</keyword>
<name>ARFG1_HUMAN</name>